<gene>
    <name evidence="1" type="primary">lpxA</name>
    <name type="ordered locus">YpsIP31758_1025</name>
</gene>
<protein>
    <recommendedName>
        <fullName evidence="1">Acyl-[acyl-carrier-protein]--UDP-N-acetylglucosamine O-acyltransferase</fullName>
        <shortName evidence="1">UDP-N-acetylglucosamine acyltransferase</shortName>
        <ecNumber evidence="1">2.3.1.129</ecNumber>
    </recommendedName>
</protein>
<comment type="function">
    <text evidence="1">Involved in the biosynthesis of lipid A, a phosphorylated glycolipid that anchors the lipopolysaccharide to the outer membrane of the cell.</text>
</comment>
<comment type="catalytic activity">
    <reaction evidence="1">
        <text>a (3R)-hydroxyacyl-[ACP] + UDP-N-acetyl-alpha-D-glucosamine = a UDP-3-O-[(3R)-3-hydroxyacyl]-N-acetyl-alpha-D-glucosamine + holo-[ACP]</text>
        <dbReference type="Rhea" id="RHEA:67812"/>
        <dbReference type="Rhea" id="RHEA-COMP:9685"/>
        <dbReference type="Rhea" id="RHEA-COMP:9945"/>
        <dbReference type="ChEBI" id="CHEBI:57705"/>
        <dbReference type="ChEBI" id="CHEBI:64479"/>
        <dbReference type="ChEBI" id="CHEBI:78827"/>
        <dbReference type="ChEBI" id="CHEBI:173225"/>
        <dbReference type="EC" id="2.3.1.129"/>
    </reaction>
</comment>
<comment type="pathway">
    <text evidence="1">Glycolipid biosynthesis; lipid IV(A) biosynthesis; lipid IV(A) from (3R)-3-hydroxytetradecanoyl-[acyl-carrier-protein] and UDP-N-acetyl-alpha-D-glucosamine: step 1/6.</text>
</comment>
<comment type="subunit">
    <text evidence="1">Homotrimer.</text>
</comment>
<comment type="subcellular location">
    <subcellularLocation>
        <location evidence="1">Cytoplasm</location>
    </subcellularLocation>
</comment>
<comment type="similarity">
    <text evidence="1">Belongs to the transferase hexapeptide repeat family. LpxA subfamily.</text>
</comment>
<proteinExistence type="inferred from homology"/>
<sequence length="262" mass="28117">MIDKTAFIHPSSIVEEGAIIGAGVYIGPFCIVGSQVEIGAGTELKSHVVVNGITKIGCDNQIYQFASIGEANQDLKYAGEPTRVEVGDRNRIRESVTIHRGTTQGGGVTKVGCDNLLMVNTHVAHDCVIGNRCILANNAALGGHVEIDDYAIIGGMTAIHQFCVIGAHVMVGGCSGITQDVPPFVIAQGNHATPFGINIEGLKRRGFDKESLHAIRSAYKLLYRSGRTLDEVKPEIAELAEQYPVVKAFNDFFARSTRGIIR</sequence>
<accession>A7FFI1</accession>
<evidence type="ECO:0000255" key="1">
    <source>
        <dbReference type="HAMAP-Rule" id="MF_00387"/>
    </source>
</evidence>
<name>LPXA_YERP3</name>
<reference key="1">
    <citation type="journal article" date="2007" name="PLoS Genet.">
        <title>The complete genome sequence of Yersinia pseudotuberculosis IP31758, the causative agent of Far East scarlet-like fever.</title>
        <authorList>
            <person name="Eppinger M."/>
            <person name="Rosovitz M.J."/>
            <person name="Fricke W.F."/>
            <person name="Rasko D.A."/>
            <person name="Kokorina G."/>
            <person name="Fayolle C."/>
            <person name="Lindler L.E."/>
            <person name="Carniel E."/>
            <person name="Ravel J."/>
        </authorList>
    </citation>
    <scope>NUCLEOTIDE SEQUENCE [LARGE SCALE GENOMIC DNA]</scope>
    <source>
        <strain>IP 31758</strain>
    </source>
</reference>
<dbReference type="EC" id="2.3.1.129" evidence="1"/>
<dbReference type="EMBL" id="CP000720">
    <property type="protein sequence ID" value="ABS48831.1"/>
    <property type="molecule type" value="Genomic_DNA"/>
</dbReference>
<dbReference type="RefSeq" id="WP_002212143.1">
    <property type="nucleotide sequence ID" value="NC_009708.1"/>
</dbReference>
<dbReference type="SMR" id="A7FFI1"/>
<dbReference type="GeneID" id="57977505"/>
<dbReference type="KEGG" id="ypi:YpsIP31758_1025"/>
<dbReference type="HOGENOM" id="CLU_061249_0_0_6"/>
<dbReference type="UniPathway" id="UPA00359">
    <property type="reaction ID" value="UER00477"/>
</dbReference>
<dbReference type="Proteomes" id="UP000002412">
    <property type="component" value="Chromosome"/>
</dbReference>
<dbReference type="GO" id="GO:0005737">
    <property type="term" value="C:cytoplasm"/>
    <property type="evidence" value="ECO:0007669"/>
    <property type="project" value="UniProtKB-SubCell"/>
</dbReference>
<dbReference type="GO" id="GO:0016020">
    <property type="term" value="C:membrane"/>
    <property type="evidence" value="ECO:0007669"/>
    <property type="project" value="GOC"/>
</dbReference>
<dbReference type="GO" id="GO:0008780">
    <property type="term" value="F:acyl-[acyl-carrier-protein]-UDP-N-acetylglucosamine O-acyltransferase activity"/>
    <property type="evidence" value="ECO:0007669"/>
    <property type="project" value="UniProtKB-UniRule"/>
</dbReference>
<dbReference type="GO" id="GO:0009245">
    <property type="term" value="P:lipid A biosynthetic process"/>
    <property type="evidence" value="ECO:0007669"/>
    <property type="project" value="UniProtKB-UniRule"/>
</dbReference>
<dbReference type="CDD" id="cd03351">
    <property type="entry name" value="LbH_UDP-GlcNAc_AT"/>
    <property type="match status" value="1"/>
</dbReference>
<dbReference type="FunFam" id="1.20.1180.10:FF:000001">
    <property type="entry name" value="Acyl-[acyl-carrier-protein]--UDP-N-acetylglucosamine O-acyltransferase"/>
    <property type="match status" value="1"/>
</dbReference>
<dbReference type="FunFam" id="2.160.10.10:FF:000003">
    <property type="entry name" value="Acyl-[acyl-carrier-protein]--UDP-N-acetylglucosamine O-acyltransferase"/>
    <property type="match status" value="1"/>
</dbReference>
<dbReference type="Gene3D" id="2.160.10.10">
    <property type="entry name" value="Hexapeptide repeat proteins"/>
    <property type="match status" value="1"/>
</dbReference>
<dbReference type="Gene3D" id="1.20.1180.10">
    <property type="entry name" value="Udp N-acetylglucosamine O-acyltransferase, C-terminal domain"/>
    <property type="match status" value="1"/>
</dbReference>
<dbReference type="HAMAP" id="MF_00387">
    <property type="entry name" value="LpxA"/>
    <property type="match status" value="1"/>
</dbReference>
<dbReference type="InterPro" id="IPR029098">
    <property type="entry name" value="Acetyltransf_C"/>
</dbReference>
<dbReference type="InterPro" id="IPR037157">
    <property type="entry name" value="Acetyltransf_C_sf"/>
</dbReference>
<dbReference type="InterPro" id="IPR001451">
    <property type="entry name" value="Hexapep"/>
</dbReference>
<dbReference type="InterPro" id="IPR018357">
    <property type="entry name" value="Hexapep_transf_CS"/>
</dbReference>
<dbReference type="InterPro" id="IPR010137">
    <property type="entry name" value="Lipid_A_LpxA"/>
</dbReference>
<dbReference type="InterPro" id="IPR011004">
    <property type="entry name" value="Trimer_LpxA-like_sf"/>
</dbReference>
<dbReference type="NCBIfam" id="TIGR01852">
    <property type="entry name" value="lipid_A_lpxA"/>
    <property type="match status" value="1"/>
</dbReference>
<dbReference type="NCBIfam" id="NF003657">
    <property type="entry name" value="PRK05289.1"/>
    <property type="match status" value="1"/>
</dbReference>
<dbReference type="PANTHER" id="PTHR43480">
    <property type="entry name" value="ACYL-[ACYL-CARRIER-PROTEIN]--UDP-N-ACETYLGLUCOSAMINE O-ACYLTRANSFERASE"/>
    <property type="match status" value="1"/>
</dbReference>
<dbReference type="PANTHER" id="PTHR43480:SF1">
    <property type="entry name" value="ACYL-[ACYL-CARRIER-PROTEIN]--UDP-N-ACETYLGLUCOSAMINE O-ACYLTRANSFERASE, MITOCHONDRIAL-RELATED"/>
    <property type="match status" value="1"/>
</dbReference>
<dbReference type="Pfam" id="PF13720">
    <property type="entry name" value="Acetyltransf_11"/>
    <property type="match status" value="1"/>
</dbReference>
<dbReference type="Pfam" id="PF00132">
    <property type="entry name" value="Hexapep"/>
    <property type="match status" value="2"/>
</dbReference>
<dbReference type="PIRSF" id="PIRSF000456">
    <property type="entry name" value="UDP-GlcNAc_acltr"/>
    <property type="match status" value="1"/>
</dbReference>
<dbReference type="SUPFAM" id="SSF51161">
    <property type="entry name" value="Trimeric LpxA-like enzymes"/>
    <property type="match status" value="1"/>
</dbReference>
<dbReference type="PROSITE" id="PS00101">
    <property type="entry name" value="HEXAPEP_TRANSFERASES"/>
    <property type="match status" value="2"/>
</dbReference>
<feature type="chain" id="PRO_1000060736" description="Acyl-[acyl-carrier-protein]--UDP-N-acetylglucosamine O-acyltransferase">
    <location>
        <begin position="1"/>
        <end position="262"/>
    </location>
</feature>
<organism>
    <name type="scientific">Yersinia pseudotuberculosis serotype O:1b (strain IP 31758)</name>
    <dbReference type="NCBI Taxonomy" id="349747"/>
    <lineage>
        <taxon>Bacteria</taxon>
        <taxon>Pseudomonadati</taxon>
        <taxon>Pseudomonadota</taxon>
        <taxon>Gammaproteobacteria</taxon>
        <taxon>Enterobacterales</taxon>
        <taxon>Yersiniaceae</taxon>
        <taxon>Yersinia</taxon>
    </lineage>
</organism>
<keyword id="KW-0012">Acyltransferase</keyword>
<keyword id="KW-0963">Cytoplasm</keyword>
<keyword id="KW-0441">Lipid A biosynthesis</keyword>
<keyword id="KW-0444">Lipid biosynthesis</keyword>
<keyword id="KW-0443">Lipid metabolism</keyword>
<keyword id="KW-0677">Repeat</keyword>
<keyword id="KW-0808">Transferase</keyword>